<reference key="1">
    <citation type="submission" date="2005-06" db="EMBL/GenBank/DDBJ databases">
        <authorList>
            <consortium name="NIH - Xenopus Gene Collection (XGC) project"/>
        </authorList>
    </citation>
    <scope>NUCLEOTIDE SEQUENCE [LARGE SCALE MRNA]</scope>
    <source>
        <tissue>Egg</tissue>
    </source>
</reference>
<comment type="function">
    <text evidence="1">Glycosyltransferase that specifically catalyzes mannosylation of cytoplasmic tRNA(Asp) modified with queuosine at position 34 (queuosine(34)). Mannosylates the cyclopentene moiety of queuosine(34) in tRNA(Asp) to form mannosyl-queuosine(34). Mannosylation of queuosine(34) in tRNA(Asp) is required to slow-down elongation at cognate codons, GAC and GAU, thereby regulating protein translation.</text>
</comment>
<comment type="catalytic activity">
    <reaction evidence="1">
        <text>queuosine(34) in tRNA(Asp) + GDP-alpha-D-mannose = O-4''-alpha-D-mannosylqueuosine(34) in tRNA(Asp) + GDP + H(+)</text>
        <dbReference type="Rhea" id="RHEA:12885"/>
        <dbReference type="Rhea" id="RHEA-COMP:18572"/>
        <dbReference type="Rhea" id="RHEA-COMP:18581"/>
        <dbReference type="ChEBI" id="CHEBI:15378"/>
        <dbReference type="ChEBI" id="CHEBI:57527"/>
        <dbReference type="ChEBI" id="CHEBI:58189"/>
        <dbReference type="ChEBI" id="CHEBI:194431"/>
        <dbReference type="ChEBI" id="CHEBI:194442"/>
        <dbReference type="EC" id="2.4.1.110"/>
    </reaction>
    <physiologicalReaction direction="left-to-right" evidence="1">
        <dbReference type="Rhea" id="RHEA:12886"/>
    </physiologicalReaction>
</comment>
<comment type="subcellular location">
    <subcellularLocation>
        <location evidence="1">Cytoplasm</location>
    </subcellularLocation>
    <subcellularLocation>
        <location evidence="1">Nucleus</location>
    </subcellularLocation>
</comment>
<comment type="similarity">
    <text evidence="2">Belongs to the glycosyltransferase group 1 family. Glycosyltransferase 4 subfamily.</text>
</comment>
<feature type="chain" id="PRO_0000311093" description="tRNA-queuosine alpha-mannosyltransferase">
    <location>
        <begin position="1"/>
        <end position="437"/>
    </location>
</feature>
<gene>
    <name type="primary">gtdc1</name>
    <name evidence="1" type="synonym">qtman</name>
</gene>
<evidence type="ECO:0000250" key="1">
    <source>
        <dbReference type="UniProtKB" id="Q4AE62"/>
    </source>
</evidence>
<evidence type="ECO:0000305" key="2"/>
<dbReference type="EC" id="2.4.1.110" evidence="1"/>
<dbReference type="EMBL" id="BC097758">
    <property type="protein sequence ID" value="AAH97758.1"/>
    <property type="molecule type" value="mRNA"/>
</dbReference>
<dbReference type="RefSeq" id="NP_001089509.1">
    <property type="nucleotide sequence ID" value="NM_001096040.1"/>
</dbReference>
<dbReference type="CAZy" id="GT4">
    <property type="family name" value="Glycosyltransferase Family 4"/>
</dbReference>
<dbReference type="DNASU" id="734561"/>
<dbReference type="GeneID" id="734561"/>
<dbReference type="KEGG" id="xla:734561"/>
<dbReference type="AGR" id="Xenbase:XB-GENE-1004425"/>
<dbReference type="CTD" id="734561"/>
<dbReference type="Xenbase" id="XB-GENE-1004425">
    <property type="gene designation" value="gtdc1.S"/>
</dbReference>
<dbReference type="OrthoDB" id="10032790at2759"/>
<dbReference type="Proteomes" id="UP000186698">
    <property type="component" value="Chromosome 9_10S"/>
</dbReference>
<dbReference type="Bgee" id="734561">
    <property type="expression patterns" value="Expressed in egg cell and 19 other cell types or tissues"/>
</dbReference>
<dbReference type="GO" id="GO:0005737">
    <property type="term" value="C:cytoplasm"/>
    <property type="evidence" value="ECO:0000250"/>
    <property type="project" value="UniProtKB"/>
</dbReference>
<dbReference type="GO" id="GO:0005634">
    <property type="term" value="C:nucleus"/>
    <property type="evidence" value="ECO:0000250"/>
    <property type="project" value="UniProtKB"/>
</dbReference>
<dbReference type="GO" id="GO:0016438">
    <property type="term" value="F:tRNA-queuosine(34) beta-mannosyltransferase activity"/>
    <property type="evidence" value="ECO:0000250"/>
    <property type="project" value="UniProtKB"/>
</dbReference>
<dbReference type="GO" id="GO:0006417">
    <property type="term" value="P:regulation of translation"/>
    <property type="evidence" value="ECO:0000250"/>
    <property type="project" value="UniProtKB"/>
</dbReference>
<dbReference type="GO" id="GO:0006400">
    <property type="term" value="P:tRNA modification"/>
    <property type="evidence" value="ECO:0000250"/>
    <property type="project" value="UniProtKB"/>
</dbReference>
<dbReference type="CDD" id="cd01635">
    <property type="entry name" value="Glycosyltransferase_GTB-type"/>
    <property type="match status" value="1"/>
</dbReference>
<dbReference type="Gene3D" id="3.40.50.2000">
    <property type="entry name" value="Glycogen Phosphorylase B"/>
    <property type="match status" value="1"/>
</dbReference>
<dbReference type="InterPro" id="IPR001296">
    <property type="entry name" value="Glyco_trans_1"/>
</dbReference>
<dbReference type="InterPro" id="IPR051862">
    <property type="entry name" value="GT-like_domain_containing_1"/>
</dbReference>
<dbReference type="InterPro" id="IPR022701">
    <property type="entry name" value="QTMAN_N"/>
</dbReference>
<dbReference type="PANTHER" id="PTHR13615">
    <property type="entry name" value="GLYCOSYLTRANSFERASE-LIKE 1"/>
    <property type="match status" value="1"/>
</dbReference>
<dbReference type="PANTHER" id="PTHR13615:SF3">
    <property type="entry name" value="GLYCOSYLTRANSFERASE-LIKE DOMAIN-CONTAINING PROTEIN 1"/>
    <property type="match status" value="1"/>
</dbReference>
<dbReference type="Pfam" id="PF00534">
    <property type="entry name" value="Glycos_transf_1"/>
    <property type="match status" value="1"/>
</dbReference>
<dbReference type="Pfam" id="PF12038">
    <property type="entry name" value="QTMAN_N"/>
    <property type="match status" value="1"/>
</dbReference>
<dbReference type="SUPFAM" id="SSF53756">
    <property type="entry name" value="UDP-Glycosyltransferase/glycogen phosphorylase"/>
    <property type="match status" value="1"/>
</dbReference>
<name>QTMAN_XENLA</name>
<sequence>MSTLLLVEAFYGGSHKQLMDLIKEEVEGCILYTLPAKKWHWRARTAALYFMQAILPSDTYRVLFTSSVLNLAELVALRPDLGKLKKILYFHENQLIYPVQKSQERDFQYGYNQILSCLVADTVVFNSAFNMESFLTSIKTFLKKIPDHRPKNLEEIIRPKCRVLYFPINFPDIRQYLPEHKCIPHNLVDKSSSDISYCPKTSIQTGRMSVEFSDHQIQCSIDESSAEQEKTTVSEKNNCEGVDHVILHSQSTLAGDIHQEKPLHIVWPHRWEHDKDPETFFKVLLKLKEKELTFHLSVLGETFTDVPDIFSEARITLGSSVLHWGYLASKDDYLQALCMADVVVSTAKHEFFGVAMLEAVHCGCYPLCPKSLVYPEIFPAVYLYSSPEQLLRKLEDFCKRPDIVRRHRFQGETERFSWAALRGEFRSLLDAEPREDL</sequence>
<keyword id="KW-0963">Cytoplasm</keyword>
<keyword id="KW-0328">Glycosyltransferase</keyword>
<keyword id="KW-0539">Nucleus</keyword>
<keyword id="KW-1185">Reference proteome</keyword>
<keyword id="KW-0808">Transferase</keyword>
<proteinExistence type="evidence at transcript level"/>
<accession>Q4V7R4</accession>
<protein>
    <recommendedName>
        <fullName evidence="2">tRNA-queuosine alpha-mannosyltransferase</fullName>
        <shortName evidence="2">QTMAN</shortName>
        <ecNumber evidence="1">2.4.1.110</ecNumber>
    </recommendedName>
    <alternativeName>
        <fullName evidence="2">Glycosyltransferase-like domain-containing protein 1</fullName>
    </alternativeName>
</protein>
<organism>
    <name type="scientific">Xenopus laevis</name>
    <name type="common">African clawed frog</name>
    <dbReference type="NCBI Taxonomy" id="8355"/>
    <lineage>
        <taxon>Eukaryota</taxon>
        <taxon>Metazoa</taxon>
        <taxon>Chordata</taxon>
        <taxon>Craniata</taxon>
        <taxon>Vertebrata</taxon>
        <taxon>Euteleostomi</taxon>
        <taxon>Amphibia</taxon>
        <taxon>Batrachia</taxon>
        <taxon>Anura</taxon>
        <taxon>Pipoidea</taxon>
        <taxon>Pipidae</taxon>
        <taxon>Xenopodinae</taxon>
        <taxon>Xenopus</taxon>
        <taxon>Xenopus</taxon>
    </lineage>
</organism>